<organism>
    <name type="scientific">Xanthomonas axonopodis pv. citri (strain 306)</name>
    <dbReference type="NCBI Taxonomy" id="190486"/>
    <lineage>
        <taxon>Bacteria</taxon>
        <taxon>Pseudomonadati</taxon>
        <taxon>Pseudomonadota</taxon>
        <taxon>Gammaproteobacteria</taxon>
        <taxon>Lysobacterales</taxon>
        <taxon>Lysobacteraceae</taxon>
        <taxon>Xanthomonas</taxon>
    </lineage>
</organism>
<feature type="chain" id="PRO_0000172794" description="Uronate isomerase">
    <location>
        <begin position="1"/>
        <end position="472"/>
    </location>
</feature>
<name>UXAC_XANAC</name>
<comment type="catalytic activity">
    <reaction evidence="1">
        <text>D-glucuronate = D-fructuronate</text>
        <dbReference type="Rhea" id="RHEA:13049"/>
        <dbReference type="ChEBI" id="CHEBI:58720"/>
        <dbReference type="ChEBI" id="CHEBI:59863"/>
        <dbReference type="EC" id="5.3.1.12"/>
    </reaction>
</comment>
<comment type="catalytic activity">
    <reaction evidence="1">
        <text>aldehydo-D-galacturonate = keto-D-tagaturonate</text>
        <dbReference type="Rhea" id="RHEA:27702"/>
        <dbReference type="ChEBI" id="CHEBI:12952"/>
        <dbReference type="ChEBI" id="CHEBI:17886"/>
        <dbReference type="EC" id="5.3.1.12"/>
    </reaction>
</comment>
<comment type="pathway">
    <text evidence="1">Carbohydrate metabolism; pentose and glucuronate interconversion.</text>
</comment>
<comment type="similarity">
    <text evidence="1">Belongs to the metallo-dependent hydrolases superfamily. Uronate isomerase family.</text>
</comment>
<sequence length="472" mass="52896">MRSSVLSLHPDRLLPADPGTRAIARRLYAQVATLPIISPHGHTDPAWFATNAPFANATELLLVPDHYVFRMLYSQGIDLDALGIPRADGTRATVDPRAAWRVFAEHYTLLRGTPSALWLNHVFHDVFDLRIRLDAGTADHYYDHITAALQTPAFLPRALFERFNIEVIATTESPLDRLQHHAAIAASGWQGRVVTAYRPDPVVDPEHEQFAGALQQFGALTGEDVLTWDGYLRAHRQRRAFFAAHGATSTDHGHPSAATADLSPAEAQRLFDTVVRGAATPEQAELFRAQVLTEMAAMSLDDGLVMQLHPGCFRNHNRQLFEQYGRDKGADIPMRTDYVHALKPLLDRHGNDPRLRLIVFTLDETSYSRELAPLAGHYPSLLLGPAWWFHDAPEGMWRFREQTLASAGFYNTVGFNDDTRAFLSIPARHDVARRVDSAFLAKLVAEHRLEEDEATEVAIDLAYRLPKQAYKL</sequence>
<proteinExistence type="inferred from homology"/>
<gene>
    <name evidence="1" type="primary">uxaC</name>
    <name type="synonym">hrmI</name>
    <name type="ordered locus">XAC4251</name>
</gene>
<evidence type="ECO:0000255" key="1">
    <source>
        <dbReference type="HAMAP-Rule" id="MF_00675"/>
    </source>
</evidence>
<reference key="1">
    <citation type="journal article" date="2002" name="Nature">
        <title>Comparison of the genomes of two Xanthomonas pathogens with differing host specificities.</title>
        <authorList>
            <person name="da Silva A.C.R."/>
            <person name="Ferro J.A."/>
            <person name="Reinach F.C."/>
            <person name="Farah C.S."/>
            <person name="Furlan L.R."/>
            <person name="Quaggio R.B."/>
            <person name="Monteiro-Vitorello C.B."/>
            <person name="Van Sluys M.A."/>
            <person name="Almeida N.F. Jr."/>
            <person name="Alves L.M.C."/>
            <person name="do Amaral A.M."/>
            <person name="Bertolini M.C."/>
            <person name="Camargo L.E.A."/>
            <person name="Camarotte G."/>
            <person name="Cannavan F."/>
            <person name="Cardozo J."/>
            <person name="Chambergo F."/>
            <person name="Ciapina L.P."/>
            <person name="Cicarelli R.M.B."/>
            <person name="Coutinho L.L."/>
            <person name="Cursino-Santos J.R."/>
            <person name="El-Dorry H."/>
            <person name="Faria J.B."/>
            <person name="Ferreira A.J.S."/>
            <person name="Ferreira R.C.C."/>
            <person name="Ferro M.I.T."/>
            <person name="Formighieri E.F."/>
            <person name="Franco M.C."/>
            <person name="Greggio C.C."/>
            <person name="Gruber A."/>
            <person name="Katsuyama A.M."/>
            <person name="Kishi L.T."/>
            <person name="Leite R.P."/>
            <person name="Lemos E.G.M."/>
            <person name="Lemos M.V.F."/>
            <person name="Locali E.C."/>
            <person name="Machado M.A."/>
            <person name="Madeira A.M.B.N."/>
            <person name="Martinez-Rossi N.M."/>
            <person name="Martins E.C."/>
            <person name="Meidanis J."/>
            <person name="Menck C.F.M."/>
            <person name="Miyaki C.Y."/>
            <person name="Moon D.H."/>
            <person name="Moreira L.M."/>
            <person name="Novo M.T.M."/>
            <person name="Okura V.K."/>
            <person name="Oliveira M.C."/>
            <person name="Oliveira V.R."/>
            <person name="Pereira H.A."/>
            <person name="Rossi A."/>
            <person name="Sena J.A.D."/>
            <person name="Silva C."/>
            <person name="de Souza R.F."/>
            <person name="Spinola L.A.F."/>
            <person name="Takita M.A."/>
            <person name="Tamura R.E."/>
            <person name="Teixeira E.C."/>
            <person name="Tezza R.I.D."/>
            <person name="Trindade dos Santos M."/>
            <person name="Truffi D."/>
            <person name="Tsai S.M."/>
            <person name="White F.F."/>
            <person name="Setubal J.C."/>
            <person name="Kitajima J.P."/>
        </authorList>
    </citation>
    <scope>NUCLEOTIDE SEQUENCE [LARGE SCALE GENOMIC DNA]</scope>
    <source>
        <strain>306</strain>
    </source>
</reference>
<accession>Q8PET9</accession>
<keyword id="KW-0413">Isomerase</keyword>
<dbReference type="EC" id="5.3.1.12" evidence="1"/>
<dbReference type="EMBL" id="AE008923">
    <property type="protein sequence ID" value="AAM39086.1"/>
    <property type="molecule type" value="Genomic_DNA"/>
</dbReference>
<dbReference type="RefSeq" id="WP_005916173.1">
    <property type="nucleotide sequence ID" value="NC_003919.1"/>
</dbReference>
<dbReference type="SMR" id="Q8PET9"/>
<dbReference type="GeneID" id="66913231"/>
<dbReference type="KEGG" id="xac:XAC4251"/>
<dbReference type="eggNOG" id="COG1904">
    <property type="taxonomic scope" value="Bacteria"/>
</dbReference>
<dbReference type="HOGENOM" id="CLU_044465_0_0_6"/>
<dbReference type="UniPathway" id="UPA00246"/>
<dbReference type="Proteomes" id="UP000000576">
    <property type="component" value="Chromosome"/>
</dbReference>
<dbReference type="GO" id="GO:0008880">
    <property type="term" value="F:glucuronate isomerase activity"/>
    <property type="evidence" value="ECO:0007669"/>
    <property type="project" value="UniProtKB-UniRule"/>
</dbReference>
<dbReference type="GO" id="GO:0019698">
    <property type="term" value="P:D-galacturonate catabolic process"/>
    <property type="evidence" value="ECO:0007669"/>
    <property type="project" value="TreeGrafter"/>
</dbReference>
<dbReference type="GO" id="GO:0042840">
    <property type="term" value="P:D-glucuronate catabolic process"/>
    <property type="evidence" value="ECO:0007669"/>
    <property type="project" value="TreeGrafter"/>
</dbReference>
<dbReference type="Gene3D" id="3.20.20.140">
    <property type="entry name" value="Metal-dependent hydrolases"/>
    <property type="match status" value="1"/>
</dbReference>
<dbReference type="Gene3D" id="1.10.2020.10">
    <property type="entry name" value="uronate isomerase, domain 2, chain A"/>
    <property type="match status" value="1"/>
</dbReference>
<dbReference type="HAMAP" id="MF_00675">
    <property type="entry name" value="UxaC"/>
    <property type="match status" value="1"/>
</dbReference>
<dbReference type="InterPro" id="IPR032466">
    <property type="entry name" value="Metal_Hydrolase"/>
</dbReference>
<dbReference type="InterPro" id="IPR003766">
    <property type="entry name" value="Uronate_isomerase"/>
</dbReference>
<dbReference type="NCBIfam" id="NF002794">
    <property type="entry name" value="PRK02925.1"/>
    <property type="match status" value="1"/>
</dbReference>
<dbReference type="PANTHER" id="PTHR30068">
    <property type="entry name" value="URONATE ISOMERASE"/>
    <property type="match status" value="1"/>
</dbReference>
<dbReference type="PANTHER" id="PTHR30068:SF4">
    <property type="entry name" value="URONATE ISOMERASE"/>
    <property type="match status" value="1"/>
</dbReference>
<dbReference type="Pfam" id="PF02614">
    <property type="entry name" value="UxaC"/>
    <property type="match status" value="1"/>
</dbReference>
<dbReference type="SUPFAM" id="SSF51556">
    <property type="entry name" value="Metallo-dependent hydrolases"/>
    <property type="match status" value="1"/>
</dbReference>
<protein>
    <recommendedName>
        <fullName evidence="1">Uronate isomerase</fullName>
        <ecNumber evidence="1">5.3.1.12</ecNumber>
    </recommendedName>
    <alternativeName>
        <fullName evidence="1">Glucuronate isomerase</fullName>
    </alternativeName>
    <alternativeName>
        <fullName evidence="1">Uronic isomerase</fullName>
    </alternativeName>
</protein>